<accession>A0R1B5</accession>
<accession>I7G5U1</accession>
<gene>
    <name type="ordered locus">MSMEG_4692</name>
    <name type="ordered locus">MSMEI_4575</name>
</gene>
<feature type="chain" id="PRO_0000396086" description="Uncharacterized protein MSMEG_4692/MSMEI_4575">
    <location>
        <begin position="1"/>
        <end position="157"/>
    </location>
</feature>
<feature type="cross-link" description="Isoglutamyl lysine isopeptide (Lys-Gln) (interchain with Q-Cter in protein Pup)" evidence="1">
    <location>
        <position position="115"/>
    </location>
</feature>
<feature type="strand" evidence="3">
    <location>
        <begin position="17"/>
        <end position="19"/>
    </location>
</feature>
<feature type="strand" evidence="2">
    <location>
        <begin position="24"/>
        <end position="26"/>
    </location>
</feature>
<feature type="strand" evidence="4">
    <location>
        <begin position="34"/>
        <end position="36"/>
    </location>
</feature>
<feature type="helix" evidence="2">
    <location>
        <begin position="45"/>
        <end position="60"/>
    </location>
</feature>
<feature type="turn" evidence="2">
    <location>
        <begin position="61"/>
        <end position="63"/>
    </location>
</feature>
<feature type="strand" evidence="2">
    <location>
        <begin position="64"/>
        <end position="69"/>
    </location>
</feature>
<feature type="helix" evidence="2">
    <location>
        <begin position="77"/>
        <end position="84"/>
    </location>
</feature>
<feature type="helix" evidence="2">
    <location>
        <begin position="85"/>
        <end position="87"/>
    </location>
</feature>
<feature type="strand" evidence="2">
    <location>
        <begin position="88"/>
        <end position="90"/>
    </location>
</feature>
<feature type="strand" evidence="2">
    <location>
        <begin position="93"/>
        <end position="100"/>
    </location>
</feature>
<feature type="turn" evidence="2">
    <location>
        <begin position="101"/>
        <end position="104"/>
    </location>
</feature>
<feature type="strand" evidence="2">
    <location>
        <begin position="105"/>
        <end position="109"/>
    </location>
</feature>
<feature type="strand" evidence="2">
    <location>
        <begin position="112"/>
        <end position="114"/>
    </location>
</feature>
<feature type="strand" evidence="2">
    <location>
        <begin position="116"/>
        <end position="118"/>
    </location>
</feature>
<feature type="turn" evidence="2">
    <location>
        <begin position="120"/>
        <end position="122"/>
    </location>
</feature>
<feature type="helix" evidence="2">
    <location>
        <begin position="123"/>
        <end position="134"/>
    </location>
</feature>
<feature type="turn" evidence="2">
    <location>
        <begin position="135"/>
        <end position="137"/>
    </location>
</feature>
<feature type="helix" evidence="2">
    <location>
        <begin position="139"/>
        <end position="153"/>
    </location>
</feature>
<protein>
    <recommendedName>
        <fullName>Uncharacterized protein MSMEG_4692/MSMEI_4575</fullName>
    </recommendedName>
</protein>
<reference key="1">
    <citation type="submission" date="2006-10" db="EMBL/GenBank/DDBJ databases">
        <authorList>
            <person name="Fleischmann R.D."/>
            <person name="Dodson R.J."/>
            <person name="Haft D.H."/>
            <person name="Merkel J.S."/>
            <person name="Nelson W.C."/>
            <person name="Fraser C.M."/>
        </authorList>
    </citation>
    <scope>NUCLEOTIDE SEQUENCE [LARGE SCALE GENOMIC DNA]</scope>
    <source>
        <strain>ATCC 700084 / mc(2)155</strain>
    </source>
</reference>
<reference key="2">
    <citation type="journal article" date="2007" name="Genome Biol.">
        <title>Interrupted coding sequences in Mycobacterium smegmatis: authentic mutations or sequencing errors?</title>
        <authorList>
            <person name="Deshayes C."/>
            <person name="Perrodou E."/>
            <person name="Gallien S."/>
            <person name="Euphrasie D."/>
            <person name="Schaeffer C."/>
            <person name="Van-Dorsselaer A."/>
            <person name="Poch O."/>
            <person name="Lecompte O."/>
            <person name="Reyrat J.-M."/>
        </authorList>
    </citation>
    <scope>NUCLEOTIDE SEQUENCE [LARGE SCALE GENOMIC DNA]</scope>
    <source>
        <strain>ATCC 700084 / mc(2)155</strain>
    </source>
</reference>
<reference key="3">
    <citation type="journal article" date="2009" name="Genome Res.">
        <title>Ortho-proteogenomics: multiple proteomes investigation through orthology and a new MS-based protocol.</title>
        <authorList>
            <person name="Gallien S."/>
            <person name="Perrodou E."/>
            <person name="Carapito C."/>
            <person name="Deshayes C."/>
            <person name="Reyrat J.-M."/>
            <person name="Van Dorsselaer A."/>
            <person name="Poch O."/>
            <person name="Schaeffer C."/>
            <person name="Lecompte O."/>
        </authorList>
    </citation>
    <scope>NUCLEOTIDE SEQUENCE [LARGE SCALE GENOMIC DNA]</scope>
    <source>
        <strain>ATCC 700084 / mc(2)155</strain>
    </source>
</reference>
<reference key="4">
    <citation type="journal article" date="2010" name="Mol. Biosyst.">
        <title>Expansion of the mycobacterial 'PUPylome'.</title>
        <authorList>
            <person name="Watrous J."/>
            <person name="Burns K."/>
            <person name="Liu W.T."/>
            <person name="Patel A."/>
            <person name="Hook V."/>
            <person name="Bafna V."/>
            <person name="Barry C.E. III"/>
            <person name="Bark S."/>
            <person name="Dorrestein P.C."/>
        </authorList>
    </citation>
    <scope>PUPYLATION AT LYS-115</scope>
    <scope>IDENTIFICATION BY MASS SPECTROMETRY</scope>
</reference>
<sequence>MASGDIATVANAELDLPYGSALTSSGRISAVTEPGELSVHYPFPTMDLVVLDDALKYGSRAAKARFAVYIGPLGADTAATAREILANVPTPENAVLLAVSPDQRAIEVVYGADVKGRGIESAAPLGVSAAAASFKEGNLIDGLISAVRVMSAGVSPA</sequence>
<name>Y4692_MYCS2</name>
<evidence type="ECO:0000269" key="1">
    <source>
    </source>
</evidence>
<evidence type="ECO:0007829" key="2">
    <source>
        <dbReference type="PDB" id="7E1W"/>
    </source>
</evidence>
<evidence type="ECO:0007829" key="3">
    <source>
        <dbReference type="PDB" id="7RH5"/>
    </source>
</evidence>
<evidence type="ECO:0007829" key="4">
    <source>
        <dbReference type="PDB" id="7RH7"/>
    </source>
</evidence>
<organism>
    <name type="scientific">Mycolicibacterium smegmatis (strain ATCC 700084 / mc(2)155)</name>
    <name type="common">Mycobacterium smegmatis</name>
    <dbReference type="NCBI Taxonomy" id="246196"/>
    <lineage>
        <taxon>Bacteria</taxon>
        <taxon>Bacillati</taxon>
        <taxon>Actinomycetota</taxon>
        <taxon>Actinomycetes</taxon>
        <taxon>Mycobacteriales</taxon>
        <taxon>Mycobacteriaceae</taxon>
        <taxon>Mycolicibacterium</taxon>
    </lineage>
</organism>
<keyword id="KW-0002">3D-structure</keyword>
<keyword id="KW-1017">Isopeptide bond</keyword>
<keyword id="KW-1185">Reference proteome</keyword>
<keyword id="KW-0832">Ubl conjugation</keyword>
<dbReference type="EMBL" id="CP000480">
    <property type="protein sequence ID" value="ABK73349.1"/>
    <property type="molecule type" value="Genomic_DNA"/>
</dbReference>
<dbReference type="EMBL" id="CP001663">
    <property type="protein sequence ID" value="AFP41027.1"/>
    <property type="molecule type" value="Genomic_DNA"/>
</dbReference>
<dbReference type="RefSeq" id="WP_003896073.1">
    <property type="nucleotide sequence ID" value="NZ_SIJM01000004.1"/>
</dbReference>
<dbReference type="RefSeq" id="YP_888953.1">
    <property type="nucleotide sequence ID" value="NC_008596.1"/>
</dbReference>
<dbReference type="PDB" id="6ADQ">
    <property type="method" value="EM"/>
    <property type="resolution" value="3.50 A"/>
    <property type="chains" value="J/V=1-157"/>
</dbReference>
<dbReference type="PDB" id="6HWH">
    <property type="method" value="EM"/>
    <property type="resolution" value="3.30 A"/>
    <property type="chains" value="O/T=1-157"/>
</dbReference>
<dbReference type="PDB" id="7E1V">
    <property type="method" value="EM"/>
    <property type="resolution" value="2.68 A"/>
    <property type="chains" value="J/V=1-157"/>
</dbReference>
<dbReference type="PDB" id="7E1W">
    <property type="method" value="EM"/>
    <property type="resolution" value="2.67 A"/>
    <property type="chains" value="J/V=1-157"/>
</dbReference>
<dbReference type="PDB" id="7E1X">
    <property type="method" value="EM"/>
    <property type="resolution" value="2.93 A"/>
    <property type="chains" value="J/V=1-157"/>
</dbReference>
<dbReference type="PDB" id="7RH5">
    <property type="method" value="EM"/>
    <property type="resolution" value="3.00 A"/>
    <property type="chains" value="V/b=13-157"/>
</dbReference>
<dbReference type="PDB" id="7RH6">
    <property type="method" value="EM"/>
    <property type="resolution" value="3.50 A"/>
    <property type="chains" value="V/b=13-157"/>
</dbReference>
<dbReference type="PDB" id="7RH7">
    <property type="method" value="EM"/>
    <property type="resolution" value="3.00 A"/>
    <property type="chains" value="V/b=13-157"/>
</dbReference>
<dbReference type="PDB" id="8OVC">
    <property type="method" value="EM"/>
    <property type="resolution" value="2.80 A"/>
    <property type="chains" value="V/a=1-157"/>
</dbReference>
<dbReference type="PDB" id="8OVD">
    <property type="method" value="EM"/>
    <property type="resolution" value="2.30 A"/>
    <property type="chains" value="V/a=1-157"/>
</dbReference>
<dbReference type="PDB" id="9DM1">
    <property type="method" value="EM"/>
    <property type="resolution" value="3.20 A"/>
    <property type="chains" value="V/b=13-157"/>
</dbReference>
<dbReference type="PDB" id="9FTZ">
    <property type="method" value="EM"/>
    <property type="resolution" value="2.60 A"/>
    <property type="chains" value="V=1-157"/>
</dbReference>
<dbReference type="PDB" id="9FU0">
    <property type="method" value="EM"/>
    <property type="resolution" value="2.70 A"/>
    <property type="chains" value="V=1-157"/>
</dbReference>
<dbReference type="PDBsum" id="6ADQ"/>
<dbReference type="PDBsum" id="6HWH"/>
<dbReference type="PDBsum" id="7E1V"/>
<dbReference type="PDBsum" id="7E1W"/>
<dbReference type="PDBsum" id="7E1X"/>
<dbReference type="PDBsum" id="7RH5"/>
<dbReference type="PDBsum" id="7RH6"/>
<dbReference type="PDBsum" id="7RH7"/>
<dbReference type="PDBsum" id="8OVC"/>
<dbReference type="PDBsum" id="8OVD"/>
<dbReference type="PDBsum" id="9DM1"/>
<dbReference type="PDBsum" id="9FTZ"/>
<dbReference type="PDBsum" id="9FU0"/>
<dbReference type="EMDB" id="EMD-0289"/>
<dbReference type="EMDB" id="EMD-17210"/>
<dbReference type="EMDB" id="EMD-17211"/>
<dbReference type="EMDB" id="EMD-24455"/>
<dbReference type="EMDB" id="EMD-24456"/>
<dbReference type="EMDB" id="EMD-24457"/>
<dbReference type="EMDB" id="EMD-30943"/>
<dbReference type="EMDB" id="EMD-30944"/>
<dbReference type="EMDB" id="EMD-30945"/>
<dbReference type="EMDB" id="EMD-46995"/>
<dbReference type="EMDB" id="EMD-50752"/>
<dbReference type="EMDB" id="EMD-50753"/>
<dbReference type="EMDB" id="EMD-9610"/>
<dbReference type="SMR" id="A0R1B5"/>
<dbReference type="IntAct" id="A0R1B5">
    <property type="interactions" value="1"/>
</dbReference>
<dbReference type="STRING" id="246196.MSMEG_4692"/>
<dbReference type="PaxDb" id="246196-MSMEI_4575"/>
<dbReference type="KEGG" id="msb:LJ00_23200"/>
<dbReference type="KEGG" id="msg:MSMEI_4575"/>
<dbReference type="KEGG" id="msm:MSMEG_4692"/>
<dbReference type="PATRIC" id="fig|246196.19.peg.4582"/>
<dbReference type="eggNOG" id="COG1512">
    <property type="taxonomic scope" value="Bacteria"/>
</dbReference>
<dbReference type="OrthoDB" id="3214027at2"/>
<dbReference type="Proteomes" id="UP000000757">
    <property type="component" value="Chromosome"/>
</dbReference>
<dbReference type="Proteomes" id="UP000006158">
    <property type="component" value="Chromosome"/>
</dbReference>
<dbReference type="InterPro" id="IPR033437">
    <property type="entry name" value="DUF5130"/>
</dbReference>
<dbReference type="Pfam" id="PF17174">
    <property type="entry name" value="DUF5130"/>
    <property type="match status" value="1"/>
</dbReference>
<proteinExistence type="evidence at protein level"/>